<proteinExistence type="evidence at protein level"/>
<gene>
    <name evidence="9 11" type="primary">Dcun1d1</name>
    <name type="synonym">Dcun1l1</name>
    <name evidence="7" type="synonym">Rp42</name>
    <name evidence="9" type="synonym">SCCRO</name>
    <name evidence="8" type="synonym">Tes3</name>
</gene>
<feature type="chain" id="PRO_0000129499" description="DCN1-like protein 1">
    <location>
        <begin position="1"/>
        <end position="259"/>
    </location>
</feature>
<feature type="domain" description="UBA-like">
    <location>
        <begin position="8"/>
        <end position="45"/>
    </location>
</feature>
<feature type="domain" description="DCUN1" evidence="2">
    <location>
        <begin position="60"/>
        <end position="248"/>
    </location>
</feature>
<feature type="site" description="Essential for interaction with UBE2M" evidence="1">
    <location>
        <position position="115"/>
    </location>
</feature>
<feature type="modified residue" description="N-acetylmethionine" evidence="1">
    <location>
        <position position="1"/>
    </location>
</feature>
<feature type="mutagenesis site" description="Loss of neddylation activity towards Cul3." evidence="6">
    <original>D</original>
    <variation>N</variation>
    <location>
        <position position="241"/>
    </location>
</feature>
<feature type="sequence conflict" description="In Ref. 3; BAC26390." evidence="10" ref="3">
    <original>R</original>
    <variation>S</variation>
    <location>
        <position position="13"/>
    </location>
</feature>
<feature type="sequence conflict" description="In Ref. 3; BAC26390." evidence="10" ref="3">
    <original>C</original>
    <variation>F</variation>
    <location>
        <position position="115"/>
    </location>
</feature>
<feature type="sequence conflict" description="In Ref. 3; BAC26390." evidence="10" ref="3">
    <original>V</original>
    <variation>L</variation>
    <location>
        <position position="259"/>
    </location>
</feature>
<keyword id="KW-0007">Acetylation</keyword>
<keyword id="KW-0963">Cytoplasm</keyword>
<keyword id="KW-0539">Nucleus</keyword>
<keyword id="KW-0656">Proto-oncogene</keyword>
<keyword id="KW-1185">Reference proteome</keyword>
<keyword id="KW-0832">Ubl conjugation</keyword>
<keyword id="KW-0833">Ubl conjugation pathway</keyword>
<reference key="1">
    <citation type="journal article" date="2000" name="Gene">
        <title>A new family of genes and pseudogenes potentially expressing testis-specific and brain-specific leucine-zipper proteins in man and mouse.</title>
        <authorList>
            <person name="Pourcel C."/>
            <person name="Jaubert J."/>
            <person name="Hadchouel M."/>
            <person name="Wu X."/>
            <person name="Schweizer J."/>
        </authorList>
    </citation>
    <scope>NUCLEOTIDE SEQUENCE [MRNA]</scope>
    <scope>TISSUE SPECIFICITY</scope>
    <source>
        <tissue>Testis</tissue>
    </source>
</reference>
<reference key="2">
    <citation type="journal article" date="2000" name="Genomics">
        <title>Cloning and expression analysis of a novel gene, RP42, mapping to an autism susceptibility locus on 6q16.</title>
        <authorList>
            <person name="Mas C."/>
            <person name="Bourgeois F."/>
            <person name="Bulfone A."/>
            <person name="Levacher B."/>
            <person name="Mugnier C."/>
            <person name="Simonneau M."/>
        </authorList>
    </citation>
    <scope>NUCLEOTIDE SEQUENCE [MRNA]</scope>
    <scope>TISSUE SPECIFICITY</scope>
    <source>
        <tissue>Telencephalon</tissue>
    </source>
</reference>
<reference key="3">
    <citation type="journal article" date="2005" name="Science">
        <title>The transcriptional landscape of the mammalian genome.</title>
        <authorList>
            <person name="Carninci P."/>
            <person name="Kasukawa T."/>
            <person name="Katayama S."/>
            <person name="Gough J."/>
            <person name="Frith M.C."/>
            <person name="Maeda N."/>
            <person name="Oyama R."/>
            <person name="Ravasi T."/>
            <person name="Lenhard B."/>
            <person name="Wells C."/>
            <person name="Kodzius R."/>
            <person name="Shimokawa K."/>
            <person name="Bajic V.B."/>
            <person name="Brenner S.E."/>
            <person name="Batalov S."/>
            <person name="Forrest A.R."/>
            <person name="Zavolan M."/>
            <person name="Davis M.J."/>
            <person name="Wilming L.G."/>
            <person name="Aidinis V."/>
            <person name="Allen J.E."/>
            <person name="Ambesi-Impiombato A."/>
            <person name="Apweiler R."/>
            <person name="Aturaliya R.N."/>
            <person name="Bailey T.L."/>
            <person name="Bansal M."/>
            <person name="Baxter L."/>
            <person name="Beisel K.W."/>
            <person name="Bersano T."/>
            <person name="Bono H."/>
            <person name="Chalk A.M."/>
            <person name="Chiu K.P."/>
            <person name="Choudhary V."/>
            <person name="Christoffels A."/>
            <person name="Clutterbuck D.R."/>
            <person name="Crowe M.L."/>
            <person name="Dalla E."/>
            <person name="Dalrymple B.P."/>
            <person name="de Bono B."/>
            <person name="Della Gatta G."/>
            <person name="di Bernardo D."/>
            <person name="Down T."/>
            <person name="Engstrom P."/>
            <person name="Fagiolini M."/>
            <person name="Faulkner G."/>
            <person name="Fletcher C.F."/>
            <person name="Fukushima T."/>
            <person name="Furuno M."/>
            <person name="Futaki S."/>
            <person name="Gariboldi M."/>
            <person name="Georgii-Hemming P."/>
            <person name="Gingeras T.R."/>
            <person name="Gojobori T."/>
            <person name="Green R.E."/>
            <person name="Gustincich S."/>
            <person name="Harbers M."/>
            <person name="Hayashi Y."/>
            <person name="Hensch T.K."/>
            <person name="Hirokawa N."/>
            <person name="Hill D."/>
            <person name="Huminiecki L."/>
            <person name="Iacono M."/>
            <person name="Ikeo K."/>
            <person name="Iwama A."/>
            <person name="Ishikawa T."/>
            <person name="Jakt M."/>
            <person name="Kanapin A."/>
            <person name="Katoh M."/>
            <person name="Kawasawa Y."/>
            <person name="Kelso J."/>
            <person name="Kitamura H."/>
            <person name="Kitano H."/>
            <person name="Kollias G."/>
            <person name="Krishnan S.P."/>
            <person name="Kruger A."/>
            <person name="Kummerfeld S.K."/>
            <person name="Kurochkin I.V."/>
            <person name="Lareau L.F."/>
            <person name="Lazarevic D."/>
            <person name="Lipovich L."/>
            <person name="Liu J."/>
            <person name="Liuni S."/>
            <person name="McWilliam S."/>
            <person name="Madan Babu M."/>
            <person name="Madera M."/>
            <person name="Marchionni L."/>
            <person name="Matsuda H."/>
            <person name="Matsuzawa S."/>
            <person name="Miki H."/>
            <person name="Mignone F."/>
            <person name="Miyake S."/>
            <person name="Morris K."/>
            <person name="Mottagui-Tabar S."/>
            <person name="Mulder N."/>
            <person name="Nakano N."/>
            <person name="Nakauchi H."/>
            <person name="Ng P."/>
            <person name="Nilsson R."/>
            <person name="Nishiguchi S."/>
            <person name="Nishikawa S."/>
            <person name="Nori F."/>
            <person name="Ohara O."/>
            <person name="Okazaki Y."/>
            <person name="Orlando V."/>
            <person name="Pang K.C."/>
            <person name="Pavan W.J."/>
            <person name="Pavesi G."/>
            <person name="Pesole G."/>
            <person name="Petrovsky N."/>
            <person name="Piazza S."/>
            <person name="Reed J."/>
            <person name="Reid J.F."/>
            <person name="Ring B.Z."/>
            <person name="Ringwald M."/>
            <person name="Rost B."/>
            <person name="Ruan Y."/>
            <person name="Salzberg S.L."/>
            <person name="Sandelin A."/>
            <person name="Schneider C."/>
            <person name="Schoenbach C."/>
            <person name="Sekiguchi K."/>
            <person name="Semple C.A."/>
            <person name="Seno S."/>
            <person name="Sessa L."/>
            <person name="Sheng Y."/>
            <person name="Shibata Y."/>
            <person name="Shimada H."/>
            <person name="Shimada K."/>
            <person name="Silva D."/>
            <person name="Sinclair B."/>
            <person name="Sperling S."/>
            <person name="Stupka E."/>
            <person name="Sugiura K."/>
            <person name="Sultana R."/>
            <person name="Takenaka Y."/>
            <person name="Taki K."/>
            <person name="Tammoja K."/>
            <person name="Tan S.L."/>
            <person name="Tang S."/>
            <person name="Taylor M.S."/>
            <person name="Tegner J."/>
            <person name="Teichmann S.A."/>
            <person name="Ueda H.R."/>
            <person name="van Nimwegen E."/>
            <person name="Verardo R."/>
            <person name="Wei C.L."/>
            <person name="Yagi K."/>
            <person name="Yamanishi H."/>
            <person name="Zabarovsky E."/>
            <person name="Zhu S."/>
            <person name="Zimmer A."/>
            <person name="Hide W."/>
            <person name="Bult C."/>
            <person name="Grimmond S.M."/>
            <person name="Teasdale R.D."/>
            <person name="Liu E.T."/>
            <person name="Brusic V."/>
            <person name="Quackenbush J."/>
            <person name="Wahlestedt C."/>
            <person name="Mattick J.S."/>
            <person name="Hume D.A."/>
            <person name="Kai C."/>
            <person name="Sasaki D."/>
            <person name="Tomaru Y."/>
            <person name="Fukuda S."/>
            <person name="Kanamori-Katayama M."/>
            <person name="Suzuki M."/>
            <person name="Aoki J."/>
            <person name="Arakawa T."/>
            <person name="Iida J."/>
            <person name="Imamura K."/>
            <person name="Itoh M."/>
            <person name="Kato T."/>
            <person name="Kawaji H."/>
            <person name="Kawagashira N."/>
            <person name="Kawashima T."/>
            <person name="Kojima M."/>
            <person name="Kondo S."/>
            <person name="Konno H."/>
            <person name="Nakano K."/>
            <person name="Ninomiya N."/>
            <person name="Nishio T."/>
            <person name="Okada M."/>
            <person name="Plessy C."/>
            <person name="Shibata K."/>
            <person name="Shiraki T."/>
            <person name="Suzuki S."/>
            <person name="Tagami M."/>
            <person name="Waki K."/>
            <person name="Watahiki A."/>
            <person name="Okamura-Oho Y."/>
            <person name="Suzuki H."/>
            <person name="Kawai J."/>
            <person name="Hayashizaki Y."/>
        </authorList>
    </citation>
    <scope>NUCLEOTIDE SEQUENCE [LARGE SCALE MRNA]</scope>
    <source>
        <strain>C57BL/6J</strain>
        <strain>NOD</strain>
        <tissue>Colon</tissue>
        <tissue>Head</tissue>
        <tissue>Stomach</tissue>
    </source>
</reference>
<reference key="4">
    <citation type="journal article" date="2004" name="Genome Res.">
        <title>The status, quality, and expansion of the NIH full-length cDNA project: the Mammalian Gene Collection (MGC).</title>
        <authorList>
            <consortium name="The MGC Project Team"/>
        </authorList>
    </citation>
    <scope>NUCLEOTIDE SEQUENCE [LARGE SCALE MRNA]</scope>
    <source>
        <strain>Czech II</strain>
        <tissue>Mammary tumor</tissue>
    </source>
</reference>
<reference key="5">
    <citation type="journal article" date="2010" name="Neoplasia">
        <title>SCCRO promotes glioma formation and malignant progression in mice.</title>
        <authorList>
            <person name="Broderick S.R."/>
            <person name="Golas B.J."/>
            <person name="Pham D."/>
            <person name="Towe C.W."/>
            <person name="Talbot S.G."/>
            <person name="Kaufman A."/>
            <person name="Bains S."/>
            <person name="Huryn L.A."/>
            <person name="Yonekawa Y."/>
            <person name="Carlson D."/>
            <person name="Hambardzumyan D."/>
            <person name="Ramanathan Y."/>
            <person name="Singh B."/>
        </authorList>
    </citation>
    <scope>DEVELOPMENTAL STAGE</scope>
    <scope>FUNCTION</scope>
</reference>
<reference key="6">
    <citation type="journal article" date="2016" name="J. Biol. Chem.">
        <title>Squamous Cell Carcinoma-related Oncogene (SCCRO) Family Members Regulate Cell Growth and Proliferation through Their Cooperative and Antagonistic Effects on Cullin Neddylation.</title>
        <authorList>
            <person name="Fu W."/>
            <person name="Sun J."/>
            <person name="Huang G."/>
            <person name="Liu J.C."/>
            <person name="Kaufman A."/>
            <person name="Ryan R.J."/>
            <person name="Ramanathan S.Y."/>
            <person name="Venkatesh T."/>
            <person name="Singh B."/>
        </authorList>
    </citation>
    <scope>FUNCTION</scope>
    <scope>TISSUE SPECIFICITY</scope>
    <scope>DISRUPTION PHENOTYPE</scope>
    <scope>MUTAGENESIS OF ASP-241</scope>
</reference>
<sequence>MNKLKSSQKDKVRQFMIFTQSSEKTAVSCLSQNDWKLDVATDNFFQNPELYIRESVKGSLDRKKLEQLYTRYKDPQDENKIGIDGIQQFCDDLALDPASISVLIIAWKFRAATQCEFSKQEFMDGMTELGCDSIEKLKAQIPKMEQELKEPGRFKDFYQFTFNFAKNPGQKGLDLEMAIAYWNLVLNGRFKFLDLWNKFLLEHHKRSIPKDTWNLLLDFSSMIADDMSNYDEEGAWPVLIDDFVEFARPQIAGTKSTTV</sequence>
<name>DCNL1_MOUSE</name>
<protein>
    <recommendedName>
        <fullName evidence="10">DCN1-like protein 1</fullName>
        <shortName evidence="1">DCNL1</shortName>
    </recommendedName>
    <alternativeName>
        <fullName evidence="9">DCUN1 domain-containing protein 1</fullName>
    </alternativeName>
    <alternativeName>
        <fullName evidence="9">Defective in cullin neddylation protein 1-like protein 1</fullName>
    </alternativeName>
    <alternativeName>
        <fullName evidence="9">Squamous cell carcinoma-related oncogene</fullName>
    </alternativeName>
    <alternativeName>
        <fullName evidence="8">Testis-specific protein 3</fullName>
    </alternativeName>
</protein>
<dbReference type="EMBL" id="AF198092">
    <property type="protein sequence ID" value="AAF04863.1"/>
    <property type="molecule type" value="mRNA"/>
</dbReference>
<dbReference type="EMBL" id="AK008657">
    <property type="protein sequence ID" value="BAB25813.1"/>
    <property type="molecule type" value="mRNA"/>
</dbReference>
<dbReference type="EMBL" id="AK029314">
    <property type="protein sequence ID" value="BAC26390.1"/>
    <property type="status" value="ALT_INIT"/>
    <property type="molecule type" value="mRNA"/>
</dbReference>
<dbReference type="EMBL" id="AK155081">
    <property type="protein sequence ID" value="BAE33033.1"/>
    <property type="molecule type" value="mRNA"/>
</dbReference>
<dbReference type="EMBL" id="AK165651">
    <property type="protein sequence ID" value="BAE38318.1"/>
    <property type="molecule type" value="mRNA"/>
</dbReference>
<dbReference type="EMBL" id="BC020161">
    <property type="protein sequence ID" value="AAH20161.1"/>
    <property type="molecule type" value="mRNA"/>
</dbReference>
<dbReference type="EMBL" id="BC031666">
    <property type="protein sequence ID" value="AAH31666.1"/>
    <property type="molecule type" value="mRNA"/>
</dbReference>
<dbReference type="EMBL" id="BC037431">
    <property type="protein sequence ID" value="AAH37431.1"/>
    <property type="molecule type" value="mRNA"/>
</dbReference>
<dbReference type="CCDS" id="CCDS57207.1"/>
<dbReference type="RefSeq" id="NP_001192290.1">
    <property type="nucleotide sequence ID" value="NM_001205361.1"/>
</dbReference>
<dbReference type="SMR" id="Q9QZ73"/>
<dbReference type="BioGRID" id="227901">
    <property type="interactions" value="24"/>
</dbReference>
<dbReference type="FunCoup" id="Q9QZ73">
    <property type="interactions" value="3529"/>
</dbReference>
<dbReference type="STRING" id="10090.ENSMUSP00000103817"/>
<dbReference type="iPTMnet" id="Q9QZ73"/>
<dbReference type="PhosphoSitePlus" id="Q9QZ73"/>
<dbReference type="PaxDb" id="10090-ENSMUSP00000113594"/>
<dbReference type="ProteomicsDB" id="279603"/>
<dbReference type="Pumba" id="Q9QZ73"/>
<dbReference type="DNASU" id="114893"/>
<dbReference type="Ensembl" id="ENSMUST00000108182.10">
    <property type="protein sequence ID" value="ENSMUSP00000103817.6"/>
    <property type="gene ID" value="ENSMUSG00000027708.15"/>
</dbReference>
<dbReference type="GeneID" id="114893"/>
<dbReference type="KEGG" id="mmu:114893"/>
<dbReference type="UCSC" id="uc008oyw.2">
    <property type="organism name" value="mouse"/>
</dbReference>
<dbReference type="AGR" id="MGI:2150386"/>
<dbReference type="CTD" id="54165"/>
<dbReference type="MGI" id="MGI:2150386">
    <property type="gene designation" value="Dcun1d1"/>
</dbReference>
<dbReference type="VEuPathDB" id="HostDB:ENSMUSG00000027708"/>
<dbReference type="eggNOG" id="KOG3077">
    <property type="taxonomic scope" value="Eukaryota"/>
</dbReference>
<dbReference type="GeneTree" id="ENSGT00940000154552"/>
<dbReference type="InParanoid" id="Q9QZ73"/>
<dbReference type="OrthoDB" id="286637at2759"/>
<dbReference type="PhylomeDB" id="Q9QZ73"/>
<dbReference type="Reactome" id="R-MMU-8951664">
    <property type="pathway name" value="Neddylation"/>
</dbReference>
<dbReference type="BioGRID-ORCS" id="114893">
    <property type="hits" value="6 hits in 77 CRISPR screens"/>
</dbReference>
<dbReference type="ChiTaRS" id="Dcun1d1">
    <property type="organism name" value="mouse"/>
</dbReference>
<dbReference type="PRO" id="PR:Q9QZ73"/>
<dbReference type="Proteomes" id="UP000000589">
    <property type="component" value="Chromosome 3"/>
</dbReference>
<dbReference type="RNAct" id="Q9QZ73">
    <property type="molecule type" value="protein"/>
</dbReference>
<dbReference type="Bgee" id="ENSMUSG00000027708">
    <property type="expression patterns" value="Expressed in animal zygote and 256 other cell types or tissues"/>
</dbReference>
<dbReference type="ExpressionAtlas" id="Q9QZ73">
    <property type="expression patterns" value="baseline and differential"/>
</dbReference>
<dbReference type="GO" id="GO:0005737">
    <property type="term" value="C:cytoplasm"/>
    <property type="evidence" value="ECO:0000250"/>
    <property type="project" value="UniProtKB"/>
</dbReference>
<dbReference type="GO" id="GO:0005634">
    <property type="term" value="C:nucleus"/>
    <property type="evidence" value="ECO:0000250"/>
    <property type="project" value="UniProtKB"/>
</dbReference>
<dbReference type="GO" id="GO:0097602">
    <property type="term" value="F:cullin family protein binding"/>
    <property type="evidence" value="ECO:0000250"/>
    <property type="project" value="UniProtKB"/>
</dbReference>
<dbReference type="GO" id="GO:2000436">
    <property type="term" value="P:positive regulation of protein neddylation"/>
    <property type="evidence" value="ECO:0000250"/>
    <property type="project" value="UniProtKB"/>
</dbReference>
<dbReference type="GO" id="GO:2000434">
    <property type="term" value="P:regulation of protein neddylation"/>
    <property type="evidence" value="ECO:0000250"/>
    <property type="project" value="UniProtKB"/>
</dbReference>
<dbReference type="GO" id="GO:0031396">
    <property type="term" value="P:regulation of protein ubiquitination"/>
    <property type="evidence" value="ECO:0000250"/>
    <property type="project" value="UniProtKB"/>
</dbReference>
<dbReference type="CDD" id="cd14411">
    <property type="entry name" value="UBA_DCNL1"/>
    <property type="match status" value="1"/>
</dbReference>
<dbReference type="FunFam" id="1.10.238.10:FF:000030">
    <property type="entry name" value="DCN1-like protein"/>
    <property type="match status" value="1"/>
</dbReference>
<dbReference type="FunFam" id="1.10.238.200:FF:000001">
    <property type="entry name" value="DCN1-like protein"/>
    <property type="match status" value="1"/>
</dbReference>
<dbReference type="FunFam" id="1.10.8.10:FF:000021">
    <property type="entry name" value="DCN1-like protein"/>
    <property type="match status" value="1"/>
</dbReference>
<dbReference type="Gene3D" id="1.10.238.200">
    <property type="entry name" value="Cullin, PONY binding domain"/>
    <property type="match status" value="1"/>
</dbReference>
<dbReference type="Gene3D" id="1.10.8.10">
    <property type="entry name" value="DNA helicase RuvA subunit, C-terminal domain"/>
    <property type="match status" value="1"/>
</dbReference>
<dbReference type="Gene3D" id="1.10.238.10">
    <property type="entry name" value="EF-hand"/>
    <property type="match status" value="1"/>
</dbReference>
<dbReference type="InterPro" id="IPR014764">
    <property type="entry name" value="DCN-prot"/>
</dbReference>
<dbReference type="InterPro" id="IPR042460">
    <property type="entry name" value="DCN1-like_PONY"/>
</dbReference>
<dbReference type="InterPro" id="IPR005176">
    <property type="entry name" value="PONY_dom"/>
</dbReference>
<dbReference type="InterPro" id="IPR009060">
    <property type="entry name" value="UBA-like_sf"/>
</dbReference>
<dbReference type="PANTHER" id="PTHR12281:SF10">
    <property type="entry name" value="DCN1-LIKE PROTEIN 1"/>
    <property type="match status" value="1"/>
</dbReference>
<dbReference type="PANTHER" id="PTHR12281">
    <property type="entry name" value="RP42 RELATED"/>
    <property type="match status" value="1"/>
</dbReference>
<dbReference type="Pfam" id="PF03556">
    <property type="entry name" value="Cullin_binding"/>
    <property type="match status" value="1"/>
</dbReference>
<dbReference type="Pfam" id="PF14555">
    <property type="entry name" value="UBA_4"/>
    <property type="match status" value="1"/>
</dbReference>
<dbReference type="SUPFAM" id="SSF46934">
    <property type="entry name" value="UBA-like"/>
    <property type="match status" value="1"/>
</dbReference>
<dbReference type="PROSITE" id="PS51229">
    <property type="entry name" value="DCUN1"/>
    <property type="match status" value="1"/>
</dbReference>
<accession>Q9QZ73</accession>
<accession>Q3TMX2</accession>
<accession>Q8CDZ7</accession>
<comment type="function">
    <text evidence="1 5 6">Part of an E3 ubiquitin ligase complex for neddylation (By similarity). Promotes neddylation of cullin components of E3 cullin-RING ubiquitin ligase complexes (PubMed:26792857). Acts by binding to cullin-RBX1 complexes in the cytoplasm and promoting their nuclear translocation, enhancing recruitment of E2-NEDD8 (UBE2M-NEDD8) thioester to the complex, and optimizing the orientation of proteins in the complex to allow efficient transfer of NEDD8 from the E2 to the cullin substrates. Involved in the release of inhibitory effets of CAND1 on cullin-RING ligase E3 complex assembly and activity (By similarity). Also acts as an oncogene facilitating malignant transformation and carcinogenic progression (PubMed:20563250).</text>
</comment>
<comment type="subunit">
    <text evidence="1">Part of an E3 complex for neddylation composed of cullins, RBX1, UBE2M and CAND1. Interacts (via the DCUN1 domain) with the unneddylated cullins: interacts with CUL1, CUL2, CUL3, CUL4A, CUL4B and CUL5; these interactions promote the cullin neddylation and the identity of the cullin dictates the affinity of the interaction. Binds neddylated CUL1. Interacts (via the C-terminus 50 AA) directly with RBX1. Interacts (via DCUN1 domain) with the N-terminally acetylated form of UBE2M and UBE2F. Interacts preferentially with UBE2M-NEDD8 thioester (via N-terminus 1-26 AA) than with free UBE2M. UBE2M N-terminal acetylation increases the affinity of this interaction by about 2 orders of magnitude. Interacts with CAND1; this interaction is indirect and is bridged by cullins such as CUL1 and CUL3. May also interact with regulators or subunits of cullin-RING ligases such as RNF7, ELOB and DDB1; these interactions are bridged by cullins. Component of VCB complex that contains at least DCUN1D1, CUL2 and VHL; this complex triggers CUL2 neddylation and consequently cullin ring ligase (CRL) substrates polyubiquitylation. Interacts with VHL; this interaction triggers engagement of HIF1A in the VCB complex and is independent of CUL2. Interacts with CUL2 independently of VHL. Interacts with SOCS1 and SOCS2. Interacts with HIF1A; this interaction increases the interaction between VHL and DCUN1D1. Interacts (via UBA-like domain) with ARIH2; promotes DCUN1D1 ubiquitination.</text>
</comment>
<comment type="subcellular location">
    <subcellularLocation>
        <location evidence="1">Nucleus</location>
    </subcellularLocation>
    <subcellularLocation>
        <location evidence="1">Cytoplasm</location>
    </subcellularLocation>
    <text evidence="1">The ubiquitinated form is localized in the cytoplasm.</text>
</comment>
<comment type="tissue specificity">
    <text evidence="3 4 6">Highly expressed in testis (PubMed:10777668, PubMed:10831844, PubMed:26792857). Also expressed in brain, heart, liver, skeletal muscle and kidney (PubMed:10777668, PubMed:10831844). In brain, preferentially expressed in the telencephalon ventricular and subventricular zones, albeit at low levels (PubMed:10777668). In adult testis, expressed in cells above seminiferous tubules, but only weakly in spermatogonia (PubMed:10831844).</text>
</comment>
<comment type="developmental stage">
    <text evidence="5">Expressed in the developing forebrain, midbrain and hindbrain at early stages of neuronal development.</text>
</comment>
<comment type="domain">
    <text evidence="1">The DCUN1 domain, also known as PONY domain, mediates the interaction with different cullins. The DCUN1 domain mediates the interaction with the N-terminally acetylated NEDD8-conjugating E2s enzyme leading to the NEDD8 transfer from N-terminally acetylated NEDD8-conjugating E2s enzyme to different cullin C-terminal domain-RBX complexes; the neddylation efficiency correlates with the DCUN1D1-cullin and DCUN1D1-E2 interaction affinities. The UBA-like domain mediates interaction with autoubiquitylated ARIH2 leading to ubiquitin ligation to DCUN1D1.</text>
</comment>
<comment type="PTM">
    <text evidence="1">Mono- and poly-ubiquitinated by ARIH2 and ARIH1. Monoubiquitination by ARIH2 is mediated by an interaction between autoubiquitinated ARIH2 and the UBA-like domain. The monoubiquitinated form preferentially interacts with non-neddylated cullins and modulates cullin RING ligase (CRL) complex composition and activity.</text>
</comment>
<comment type="disruption phenotype">
    <text evidence="6">Reduced neddylation of Cul3 in lysates from testis.</text>
</comment>
<comment type="sequence caution" evidence="10">
    <conflict type="erroneous initiation">
        <sequence resource="EMBL-CDS" id="BAC26390"/>
    </conflict>
</comment>
<evidence type="ECO:0000250" key="1">
    <source>
        <dbReference type="UniProtKB" id="Q96GG9"/>
    </source>
</evidence>
<evidence type="ECO:0000255" key="2">
    <source>
        <dbReference type="PROSITE-ProRule" id="PRU00574"/>
    </source>
</evidence>
<evidence type="ECO:0000269" key="3">
    <source>
    </source>
</evidence>
<evidence type="ECO:0000269" key="4">
    <source>
    </source>
</evidence>
<evidence type="ECO:0000269" key="5">
    <source>
    </source>
</evidence>
<evidence type="ECO:0000269" key="6">
    <source>
    </source>
</evidence>
<evidence type="ECO:0000303" key="7">
    <source>
    </source>
</evidence>
<evidence type="ECO:0000303" key="8">
    <source>
    </source>
</evidence>
<evidence type="ECO:0000303" key="9">
    <source>
    </source>
</evidence>
<evidence type="ECO:0000305" key="10"/>
<evidence type="ECO:0000312" key="11">
    <source>
        <dbReference type="MGI" id="MGI:2150386"/>
    </source>
</evidence>
<organism>
    <name type="scientific">Mus musculus</name>
    <name type="common">Mouse</name>
    <dbReference type="NCBI Taxonomy" id="10090"/>
    <lineage>
        <taxon>Eukaryota</taxon>
        <taxon>Metazoa</taxon>
        <taxon>Chordata</taxon>
        <taxon>Craniata</taxon>
        <taxon>Vertebrata</taxon>
        <taxon>Euteleostomi</taxon>
        <taxon>Mammalia</taxon>
        <taxon>Eutheria</taxon>
        <taxon>Euarchontoglires</taxon>
        <taxon>Glires</taxon>
        <taxon>Rodentia</taxon>
        <taxon>Myomorpha</taxon>
        <taxon>Muroidea</taxon>
        <taxon>Muridae</taxon>
        <taxon>Murinae</taxon>
        <taxon>Mus</taxon>
        <taxon>Mus</taxon>
    </lineage>
</organism>